<gene>
    <name evidence="1" type="primary">groEL2</name>
    <name evidence="1" type="synonym">groL2</name>
    <name type="ordered locus">RPA2164</name>
</gene>
<accession>P60365</accession>
<organism>
    <name type="scientific">Rhodopseudomonas palustris (strain ATCC BAA-98 / CGA009)</name>
    <dbReference type="NCBI Taxonomy" id="258594"/>
    <lineage>
        <taxon>Bacteria</taxon>
        <taxon>Pseudomonadati</taxon>
        <taxon>Pseudomonadota</taxon>
        <taxon>Alphaproteobacteria</taxon>
        <taxon>Hyphomicrobiales</taxon>
        <taxon>Nitrobacteraceae</taxon>
        <taxon>Rhodopseudomonas</taxon>
    </lineage>
</organism>
<proteinExistence type="inferred from homology"/>
<keyword id="KW-0067">ATP-binding</keyword>
<keyword id="KW-0143">Chaperone</keyword>
<keyword id="KW-0963">Cytoplasm</keyword>
<keyword id="KW-0413">Isomerase</keyword>
<keyword id="KW-0547">Nucleotide-binding</keyword>
<reference key="1">
    <citation type="journal article" date="2004" name="Nat. Biotechnol.">
        <title>Complete genome sequence of the metabolically versatile photosynthetic bacterium Rhodopseudomonas palustris.</title>
        <authorList>
            <person name="Larimer F.W."/>
            <person name="Chain P."/>
            <person name="Hauser L."/>
            <person name="Lamerdin J.E."/>
            <person name="Malfatti S."/>
            <person name="Do L."/>
            <person name="Land M.L."/>
            <person name="Pelletier D.A."/>
            <person name="Beatty J.T."/>
            <person name="Lang A.S."/>
            <person name="Tabita F.R."/>
            <person name="Gibson J.L."/>
            <person name="Hanson T.E."/>
            <person name="Bobst C."/>
            <person name="Torres y Torres J.L."/>
            <person name="Peres C."/>
            <person name="Harrison F.H."/>
            <person name="Gibson J."/>
            <person name="Harwood C.S."/>
        </authorList>
    </citation>
    <scope>NUCLEOTIDE SEQUENCE [LARGE SCALE GENOMIC DNA]</scope>
    <source>
        <strain>ATCC BAA-98 / CGA009</strain>
    </source>
</reference>
<comment type="function">
    <text evidence="1">Together with its co-chaperonin GroES, plays an essential role in assisting protein folding. The GroEL-GroES system forms a nano-cage that allows encapsulation of the non-native substrate proteins and provides a physical environment optimized to promote and accelerate protein folding.</text>
</comment>
<comment type="catalytic activity">
    <reaction evidence="1">
        <text>ATP + H2O + a folded polypeptide = ADP + phosphate + an unfolded polypeptide.</text>
        <dbReference type="EC" id="5.6.1.7"/>
    </reaction>
</comment>
<comment type="subunit">
    <text evidence="1">Forms a cylinder of 14 subunits composed of two heptameric rings stacked back-to-back. Interacts with the co-chaperonin GroES.</text>
</comment>
<comment type="subcellular location">
    <subcellularLocation>
        <location evidence="1">Cytoplasm</location>
    </subcellularLocation>
</comment>
<comment type="similarity">
    <text evidence="1">Belongs to the chaperonin (HSP60) family.</text>
</comment>
<sequence>MSAKEVKFGVDARDRMLRGVDILANAVKVTLGPKGRNVVLDKSFGAPRITKDGVTVAKDIELDDKFENMGAQMVREVASKSADAAGDGTTTATVLAQAIVREGAKAVAAGMNPMDLKRGIDLAVEAVVADLVKNSKKVTSNDEIAQVGTISANGDAEIGKFLADAMKKVGNEGVITVEEAKSLETELDVVEGMQFDRGYISPYFVTNADKMRVEFDDAYILINEKKLSNLNELLPLLEAVVQTGKPLVIVAEDVEGEALATLVVNRLRGGLKVAAVKAPGFGDRRKAMLQDIAILTGGQAISEDLGIKMENVTLQMLGRAKKVMIDKENTTIVNGAGKKADIEARVAQIKAQIEETTSDYDREKLQERLAKLAGGVAVIRVGGATEVEVKERKDRVDDAMHATRAAVEEGIVPGGGVALLRASEQLKGLKTKNDDQKTGVEIVRRALSAPARQIAINAGEDGSVIVGKVLEKEQYAFGFDSQSGEYGDLVKKGIIDPTKVVRTAIQNAASVAALLITTEAMIAELPKKGGAGAGGMPPGGGMGGMDF</sequence>
<evidence type="ECO:0000255" key="1">
    <source>
        <dbReference type="HAMAP-Rule" id="MF_00600"/>
    </source>
</evidence>
<dbReference type="EC" id="5.6.1.7" evidence="1"/>
<dbReference type="EMBL" id="BX572599">
    <property type="protein sequence ID" value="CAE27605.1"/>
    <property type="molecule type" value="Genomic_DNA"/>
</dbReference>
<dbReference type="RefSeq" id="WP_011157719.1">
    <property type="nucleotide sequence ID" value="NZ_CP116810.1"/>
</dbReference>
<dbReference type="SMR" id="P60365"/>
<dbReference type="STRING" id="258594.RPA2164"/>
<dbReference type="GeneID" id="66893214"/>
<dbReference type="eggNOG" id="COG0459">
    <property type="taxonomic scope" value="Bacteria"/>
</dbReference>
<dbReference type="HOGENOM" id="CLU_016503_3_0_5"/>
<dbReference type="PhylomeDB" id="P60365"/>
<dbReference type="GO" id="GO:0005737">
    <property type="term" value="C:cytoplasm"/>
    <property type="evidence" value="ECO:0007669"/>
    <property type="project" value="UniProtKB-SubCell"/>
</dbReference>
<dbReference type="GO" id="GO:0005524">
    <property type="term" value="F:ATP binding"/>
    <property type="evidence" value="ECO:0007669"/>
    <property type="project" value="UniProtKB-UniRule"/>
</dbReference>
<dbReference type="GO" id="GO:0140662">
    <property type="term" value="F:ATP-dependent protein folding chaperone"/>
    <property type="evidence" value="ECO:0007669"/>
    <property type="project" value="InterPro"/>
</dbReference>
<dbReference type="GO" id="GO:0016853">
    <property type="term" value="F:isomerase activity"/>
    <property type="evidence" value="ECO:0007669"/>
    <property type="project" value="UniProtKB-KW"/>
</dbReference>
<dbReference type="GO" id="GO:0051082">
    <property type="term" value="F:unfolded protein binding"/>
    <property type="evidence" value="ECO:0007669"/>
    <property type="project" value="UniProtKB-UniRule"/>
</dbReference>
<dbReference type="GO" id="GO:0042026">
    <property type="term" value="P:protein refolding"/>
    <property type="evidence" value="ECO:0007669"/>
    <property type="project" value="UniProtKB-UniRule"/>
</dbReference>
<dbReference type="CDD" id="cd03344">
    <property type="entry name" value="GroEL"/>
    <property type="match status" value="1"/>
</dbReference>
<dbReference type="FunFam" id="1.10.560.10:FF:000001">
    <property type="entry name" value="60 kDa chaperonin"/>
    <property type="match status" value="1"/>
</dbReference>
<dbReference type="FunFam" id="3.50.7.10:FF:000001">
    <property type="entry name" value="60 kDa chaperonin"/>
    <property type="match status" value="1"/>
</dbReference>
<dbReference type="Gene3D" id="3.50.7.10">
    <property type="entry name" value="GroEL"/>
    <property type="match status" value="1"/>
</dbReference>
<dbReference type="Gene3D" id="1.10.560.10">
    <property type="entry name" value="GroEL-like equatorial domain"/>
    <property type="match status" value="1"/>
</dbReference>
<dbReference type="Gene3D" id="3.30.260.10">
    <property type="entry name" value="TCP-1-like chaperonin intermediate domain"/>
    <property type="match status" value="1"/>
</dbReference>
<dbReference type="HAMAP" id="MF_00600">
    <property type="entry name" value="CH60"/>
    <property type="match status" value="1"/>
</dbReference>
<dbReference type="InterPro" id="IPR018370">
    <property type="entry name" value="Chaperonin_Cpn60_CS"/>
</dbReference>
<dbReference type="InterPro" id="IPR001844">
    <property type="entry name" value="Cpn60/GroEL"/>
</dbReference>
<dbReference type="InterPro" id="IPR002423">
    <property type="entry name" value="Cpn60/GroEL/TCP-1"/>
</dbReference>
<dbReference type="InterPro" id="IPR027409">
    <property type="entry name" value="GroEL-like_apical_dom_sf"/>
</dbReference>
<dbReference type="InterPro" id="IPR027413">
    <property type="entry name" value="GROEL-like_equatorial_sf"/>
</dbReference>
<dbReference type="InterPro" id="IPR027410">
    <property type="entry name" value="TCP-1-like_intermed_sf"/>
</dbReference>
<dbReference type="NCBIfam" id="TIGR02348">
    <property type="entry name" value="GroEL"/>
    <property type="match status" value="1"/>
</dbReference>
<dbReference type="NCBIfam" id="NF000592">
    <property type="entry name" value="PRK00013.1"/>
    <property type="match status" value="1"/>
</dbReference>
<dbReference type="NCBIfam" id="NF009487">
    <property type="entry name" value="PRK12849.1"/>
    <property type="match status" value="1"/>
</dbReference>
<dbReference type="NCBIfam" id="NF009488">
    <property type="entry name" value="PRK12850.1"/>
    <property type="match status" value="1"/>
</dbReference>
<dbReference type="NCBIfam" id="NF009489">
    <property type="entry name" value="PRK12851.1"/>
    <property type="match status" value="1"/>
</dbReference>
<dbReference type="NCBIfam" id="NF010704">
    <property type="entry name" value="PRK14104.1"/>
    <property type="match status" value="1"/>
</dbReference>
<dbReference type="PANTHER" id="PTHR45633">
    <property type="entry name" value="60 KDA HEAT SHOCK PROTEIN, MITOCHONDRIAL"/>
    <property type="match status" value="1"/>
</dbReference>
<dbReference type="Pfam" id="PF00118">
    <property type="entry name" value="Cpn60_TCP1"/>
    <property type="match status" value="1"/>
</dbReference>
<dbReference type="PRINTS" id="PR00298">
    <property type="entry name" value="CHAPERONIN60"/>
</dbReference>
<dbReference type="SUPFAM" id="SSF52029">
    <property type="entry name" value="GroEL apical domain-like"/>
    <property type="match status" value="1"/>
</dbReference>
<dbReference type="SUPFAM" id="SSF48592">
    <property type="entry name" value="GroEL equatorial domain-like"/>
    <property type="match status" value="1"/>
</dbReference>
<dbReference type="SUPFAM" id="SSF54849">
    <property type="entry name" value="GroEL-intermediate domain like"/>
    <property type="match status" value="1"/>
</dbReference>
<dbReference type="PROSITE" id="PS00296">
    <property type="entry name" value="CHAPERONINS_CPN60"/>
    <property type="match status" value="1"/>
</dbReference>
<name>CH602_RHOPA</name>
<protein>
    <recommendedName>
        <fullName evidence="1">Chaperonin GroEL 2</fullName>
        <ecNumber evidence="1">5.6.1.7</ecNumber>
    </recommendedName>
    <alternativeName>
        <fullName evidence="1">60 kDa chaperonin 2</fullName>
    </alternativeName>
    <alternativeName>
        <fullName evidence="1">Chaperonin-60 2</fullName>
        <shortName evidence="1">Cpn60 2</shortName>
    </alternativeName>
</protein>
<feature type="chain" id="PRO_0000063510" description="Chaperonin GroEL 2">
    <location>
        <begin position="1"/>
        <end position="547"/>
    </location>
</feature>
<feature type="binding site" evidence="1">
    <location>
        <begin position="30"/>
        <end position="33"/>
    </location>
    <ligand>
        <name>ATP</name>
        <dbReference type="ChEBI" id="CHEBI:30616"/>
    </ligand>
</feature>
<feature type="binding site" evidence="1">
    <location>
        <position position="51"/>
    </location>
    <ligand>
        <name>ATP</name>
        <dbReference type="ChEBI" id="CHEBI:30616"/>
    </ligand>
</feature>
<feature type="binding site" evidence="1">
    <location>
        <begin position="87"/>
        <end position="91"/>
    </location>
    <ligand>
        <name>ATP</name>
        <dbReference type="ChEBI" id="CHEBI:30616"/>
    </ligand>
</feature>
<feature type="binding site" evidence="1">
    <location>
        <position position="415"/>
    </location>
    <ligand>
        <name>ATP</name>
        <dbReference type="ChEBI" id="CHEBI:30616"/>
    </ligand>
</feature>
<feature type="binding site" evidence="1">
    <location>
        <position position="496"/>
    </location>
    <ligand>
        <name>ATP</name>
        <dbReference type="ChEBI" id="CHEBI:30616"/>
    </ligand>
</feature>